<organism>
    <name type="scientific">Haemophilus influenzae (strain ATCC 51907 / DSM 11121 / KW20 / Rd)</name>
    <dbReference type="NCBI Taxonomy" id="71421"/>
    <lineage>
        <taxon>Bacteria</taxon>
        <taxon>Pseudomonadati</taxon>
        <taxon>Pseudomonadota</taxon>
        <taxon>Gammaproteobacteria</taxon>
        <taxon>Pasteurellales</taxon>
        <taxon>Pasteurellaceae</taxon>
        <taxon>Haemophilus</taxon>
    </lineage>
</organism>
<gene>
    <name type="primary">gloA</name>
    <name type="ordered locus">HI_0323</name>
</gene>
<comment type="function">
    <text evidence="1">Catalyzes the conversion of hemimercaptal, formed from methylglyoxal and glutathione, to S-lactoylglutathione.</text>
</comment>
<comment type="catalytic activity">
    <reaction>
        <text>(R)-S-lactoylglutathione = methylglyoxal + glutathione</text>
        <dbReference type="Rhea" id="RHEA:19069"/>
        <dbReference type="ChEBI" id="CHEBI:17158"/>
        <dbReference type="ChEBI" id="CHEBI:57474"/>
        <dbReference type="ChEBI" id="CHEBI:57925"/>
        <dbReference type="EC" id="4.4.1.5"/>
    </reaction>
</comment>
<comment type="cofactor">
    <cofactor evidence="1">
        <name>Ni(2+)</name>
        <dbReference type="ChEBI" id="CHEBI:49786"/>
    </cofactor>
    <text evidence="1">Binds 1 nickel ion per subunit. In the homodimer, two nickel ions are bound between subunits.</text>
</comment>
<comment type="pathway">
    <text>Secondary metabolite metabolism; methylglyoxal degradation; (R)-lactate from methylglyoxal: step 1/2.</text>
</comment>
<comment type="subunit">
    <text evidence="1">Homodimer.</text>
</comment>
<comment type="similarity">
    <text evidence="3">Belongs to the glyoxalase I family.</text>
</comment>
<evidence type="ECO:0000250" key="1"/>
<evidence type="ECO:0000255" key="2">
    <source>
        <dbReference type="PROSITE-ProRule" id="PRU01163"/>
    </source>
</evidence>
<evidence type="ECO:0000305" key="3"/>
<keyword id="KW-0456">Lyase</keyword>
<keyword id="KW-0479">Metal-binding</keyword>
<keyword id="KW-0533">Nickel</keyword>
<keyword id="KW-1185">Reference proteome</keyword>
<reference key="1">
    <citation type="journal article" date="1995" name="Science">
        <title>Whole-genome random sequencing and assembly of Haemophilus influenzae Rd.</title>
        <authorList>
            <person name="Fleischmann R.D."/>
            <person name="Adams M.D."/>
            <person name="White O."/>
            <person name="Clayton R.A."/>
            <person name="Kirkness E.F."/>
            <person name="Kerlavage A.R."/>
            <person name="Bult C.J."/>
            <person name="Tomb J.-F."/>
            <person name="Dougherty B.A."/>
            <person name="Merrick J.M."/>
            <person name="McKenney K."/>
            <person name="Sutton G.G."/>
            <person name="FitzHugh W."/>
            <person name="Fields C.A."/>
            <person name="Gocayne J.D."/>
            <person name="Scott J.D."/>
            <person name="Shirley R."/>
            <person name="Liu L.-I."/>
            <person name="Glodek A."/>
            <person name="Kelley J.M."/>
            <person name="Weidman J.F."/>
            <person name="Phillips C.A."/>
            <person name="Spriggs T."/>
            <person name="Hedblom E."/>
            <person name="Cotton M.D."/>
            <person name="Utterback T.R."/>
            <person name="Hanna M.C."/>
            <person name="Nguyen D.T."/>
            <person name="Saudek D.M."/>
            <person name="Brandon R.C."/>
            <person name="Fine L.D."/>
            <person name="Fritchman J.L."/>
            <person name="Fuhrmann J.L."/>
            <person name="Geoghagen N.S.M."/>
            <person name="Gnehm C.L."/>
            <person name="McDonald L.A."/>
            <person name="Small K.V."/>
            <person name="Fraser C.M."/>
            <person name="Smith H.O."/>
            <person name="Venter J.C."/>
        </authorList>
    </citation>
    <scope>NUCLEOTIDE SEQUENCE [LARGE SCALE GENOMIC DNA]</scope>
    <source>
        <strain>ATCC 51907 / DSM 11121 / KW20 / Rd</strain>
    </source>
</reference>
<reference key="2">
    <citation type="journal article" date="1998" name="Electrophoresis">
        <title>Reference map of the low molecular mass proteins of Haemophilus influenzae.</title>
        <authorList>
            <person name="Fountoulakis M."/>
            <person name="Juranville J.-F."/>
            <person name="Roeder D."/>
            <person name="Evers S."/>
            <person name="Berndt P."/>
            <person name="Langen H."/>
        </authorList>
    </citation>
    <scope>IDENTIFICATION BY MASS SPECTROMETRY</scope>
    <source>
        <strain>ATCC 51907 / DSM 11121 / KW20 / Rd</strain>
    </source>
</reference>
<accession>P44638</accession>
<proteinExistence type="evidence at protein level"/>
<protein>
    <recommendedName>
        <fullName>Lactoylglutathione lyase</fullName>
        <ecNumber>4.4.1.5</ecNumber>
    </recommendedName>
    <alternativeName>
        <fullName>Aldoketomutase</fullName>
    </alternativeName>
    <alternativeName>
        <fullName>Glyoxalase I</fullName>
        <shortName>Glx I</shortName>
    </alternativeName>
    <alternativeName>
        <fullName>Ketone-aldehyde mutase</fullName>
    </alternativeName>
    <alternativeName>
        <fullName>Methylglyoxalase</fullName>
    </alternativeName>
    <alternativeName>
        <fullName>S-D-lactoylglutathione methylglyoxal lyase</fullName>
    </alternativeName>
</protein>
<name>LGUL_HAEIN</name>
<dbReference type="EC" id="4.4.1.5"/>
<dbReference type="EMBL" id="L42023">
    <property type="protein sequence ID" value="AAC21986.1"/>
    <property type="molecule type" value="Genomic_DNA"/>
</dbReference>
<dbReference type="PIR" id="I64147">
    <property type="entry name" value="I64147"/>
</dbReference>
<dbReference type="RefSeq" id="NP_438488.1">
    <property type="nucleotide sequence ID" value="NC_000907.1"/>
</dbReference>
<dbReference type="SMR" id="P44638"/>
<dbReference type="STRING" id="71421.HI_0323"/>
<dbReference type="EnsemblBacteria" id="AAC21986">
    <property type="protein sequence ID" value="AAC21986"/>
    <property type="gene ID" value="HI_0323"/>
</dbReference>
<dbReference type="KEGG" id="hin:HI_0323"/>
<dbReference type="PATRIC" id="fig|71421.8.peg.340"/>
<dbReference type="eggNOG" id="COG0346">
    <property type="taxonomic scope" value="Bacteria"/>
</dbReference>
<dbReference type="HOGENOM" id="CLU_046006_8_1_6"/>
<dbReference type="OrthoDB" id="9789841at2"/>
<dbReference type="PhylomeDB" id="P44638"/>
<dbReference type="BioCyc" id="HINF71421:G1GJ1-339-MONOMER"/>
<dbReference type="UniPathway" id="UPA00619">
    <property type="reaction ID" value="UER00675"/>
</dbReference>
<dbReference type="Proteomes" id="UP000000579">
    <property type="component" value="Chromosome"/>
</dbReference>
<dbReference type="GO" id="GO:0005737">
    <property type="term" value="C:cytoplasm"/>
    <property type="evidence" value="ECO:0000318"/>
    <property type="project" value="GO_Central"/>
</dbReference>
<dbReference type="GO" id="GO:0004462">
    <property type="term" value="F:lactoylglutathione lyase activity"/>
    <property type="evidence" value="ECO:0000318"/>
    <property type="project" value="GO_Central"/>
</dbReference>
<dbReference type="GO" id="GO:0046872">
    <property type="term" value="F:metal ion binding"/>
    <property type="evidence" value="ECO:0007669"/>
    <property type="project" value="UniProtKB-KW"/>
</dbReference>
<dbReference type="GO" id="GO:0019243">
    <property type="term" value="P:methylglyoxal catabolic process to D-lactate via S-lactoyl-glutathione"/>
    <property type="evidence" value="ECO:0000318"/>
    <property type="project" value="GO_Central"/>
</dbReference>
<dbReference type="CDD" id="cd16358">
    <property type="entry name" value="GlxI_Ni"/>
    <property type="match status" value="1"/>
</dbReference>
<dbReference type="Gene3D" id="3.10.180.10">
    <property type="entry name" value="2,3-Dihydroxybiphenyl 1,2-Dioxygenase, domain 1"/>
    <property type="match status" value="1"/>
</dbReference>
<dbReference type="InterPro" id="IPR029068">
    <property type="entry name" value="Glyas_Bleomycin-R_OHBP_Dase"/>
</dbReference>
<dbReference type="InterPro" id="IPR004360">
    <property type="entry name" value="Glyas_Fos-R_dOase_dom"/>
</dbReference>
<dbReference type="InterPro" id="IPR004361">
    <property type="entry name" value="Glyoxalase_1"/>
</dbReference>
<dbReference type="InterPro" id="IPR018146">
    <property type="entry name" value="Glyoxalase_1_CS"/>
</dbReference>
<dbReference type="InterPro" id="IPR037523">
    <property type="entry name" value="VOC"/>
</dbReference>
<dbReference type="NCBIfam" id="TIGR00068">
    <property type="entry name" value="glyox_I"/>
    <property type="match status" value="1"/>
</dbReference>
<dbReference type="PANTHER" id="PTHR46036">
    <property type="entry name" value="LACTOYLGLUTATHIONE LYASE"/>
    <property type="match status" value="1"/>
</dbReference>
<dbReference type="PANTHER" id="PTHR46036:SF5">
    <property type="entry name" value="LACTOYLGLUTATHIONE LYASE"/>
    <property type="match status" value="1"/>
</dbReference>
<dbReference type="Pfam" id="PF00903">
    <property type="entry name" value="Glyoxalase"/>
    <property type="match status" value="1"/>
</dbReference>
<dbReference type="SUPFAM" id="SSF54593">
    <property type="entry name" value="Glyoxalase/Bleomycin resistance protein/Dihydroxybiphenyl dioxygenase"/>
    <property type="match status" value="1"/>
</dbReference>
<dbReference type="PROSITE" id="PS00934">
    <property type="entry name" value="GLYOXALASE_I_1"/>
    <property type="match status" value="1"/>
</dbReference>
<dbReference type="PROSITE" id="PS00935">
    <property type="entry name" value="GLYOXALASE_I_2"/>
    <property type="match status" value="1"/>
</dbReference>
<dbReference type="PROSITE" id="PS51819">
    <property type="entry name" value="VOC"/>
    <property type="match status" value="1"/>
</dbReference>
<sequence length="135" mass="14893">MQILHTMLRVGDLDRSIKFYQDVLGMRLLRTSENPEYKYTLAFLGYEDGESAAEIELTYNWGVDKYEHGTAYGHIAIGVDDIYATCEAVRASGGNVTREAGPVKGGSTVIAFVEDPDGYKIEFIENKSTKSGLGN</sequence>
<feature type="chain" id="PRO_0000168093" description="Lactoylglutathione lyase">
    <location>
        <begin position="1"/>
        <end position="135"/>
    </location>
</feature>
<feature type="domain" description="VOC" evidence="2">
    <location>
        <begin position="2"/>
        <end position="126"/>
    </location>
</feature>
<feature type="active site" description="Proton donor/acceptor" evidence="1">
    <location>
        <position position="122"/>
    </location>
</feature>
<feature type="binding site" evidence="1">
    <location>
        <position position="5"/>
    </location>
    <ligand>
        <name>Ni(2+)</name>
        <dbReference type="ChEBI" id="CHEBI:49786"/>
        <note>ligand shared between dimeric partners</note>
    </ligand>
</feature>
<feature type="binding site" evidence="1">
    <location>
        <position position="9"/>
    </location>
    <ligand>
        <name>substrate</name>
        <note>ligand shared between dimeric partners</note>
    </ligand>
</feature>
<feature type="binding site" evidence="1">
    <location>
        <position position="56"/>
    </location>
    <ligand>
        <name>Ni(2+)</name>
        <dbReference type="ChEBI" id="CHEBI:49786"/>
        <note>ligand shared between dimeric partners</note>
    </ligand>
</feature>
<feature type="binding site" evidence="1">
    <location>
        <position position="60"/>
    </location>
    <ligand>
        <name>substrate</name>
        <note>ligand shared between dimeric partners</note>
    </ligand>
</feature>
<feature type="binding site" description="in other chain" evidence="1">
    <location>
        <position position="74"/>
    </location>
    <ligand>
        <name>Ni(2+)</name>
        <dbReference type="ChEBI" id="CHEBI:49786"/>
        <note>ligand shared between dimeric partners</note>
    </ligand>
</feature>
<feature type="binding site" description="in other chain" evidence="1">
    <location>
        <position position="74"/>
    </location>
    <ligand>
        <name>substrate</name>
        <note>ligand shared between dimeric partners</note>
    </ligand>
</feature>
<feature type="binding site" description="in other chain" evidence="1">
    <location>
        <position position="122"/>
    </location>
    <ligand>
        <name>Ni(2+)</name>
        <dbReference type="ChEBI" id="CHEBI:49786"/>
        <note>ligand shared between dimeric partners</note>
    </ligand>
</feature>